<proteinExistence type="evidence at protein level"/>
<evidence type="ECO:0000256" key="1">
    <source>
        <dbReference type="SAM" id="MobiDB-lite"/>
    </source>
</evidence>
<accession>Q2KIR0</accession>
<gene>
    <name type="primary">SPMIP2</name>
</gene>
<name>SMIP2_BOVIN</name>
<sequence length="197" mass="22602">MACVTFREPISATVGKRMVFTGPAYVKDHLPQVAQHTAYIGEKRPALEKTGDLRYLWRPASNRSLPAKYKPEYVGEIGWGIPEYDFINKTRLQTGFHIKYEEFSQAAIDKLSHRYQSPWQPNPSIMDAEGSSSRGFIAWHMGDYEDTSQRNSKRAVLLRQSKAALPIGSRPPKLPKLPKKEEKSKFRPLHQHDARCY</sequence>
<reference key="1">
    <citation type="submission" date="2006-01" db="EMBL/GenBank/DDBJ databases">
        <authorList>
            <consortium name="NIH - Mammalian Gene Collection (MGC) project"/>
        </authorList>
    </citation>
    <scope>NUCLEOTIDE SEQUENCE [LARGE SCALE MRNA]</scope>
    <source>
        <strain>Hereford</strain>
        <tissue>Testis</tissue>
    </source>
</reference>
<feature type="chain" id="PRO_0000325754" description="Protein SPMIP2">
    <location>
        <begin position="1"/>
        <end position="197"/>
    </location>
</feature>
<feature type="region of interest" description="Disordered" evidence="1">
    <location>
        <begin position="161"/>
        <end position="197"/>
    </location>
</feature>
<feature type="compositionally biased region" description="Basic and acidic residues" evidence="1">
    <location>
        <begin position="178"/>
        <end position="197"/>
    </location>
</feature>
<protein>
    <recommendedName>
        <fullName>Protein SPMIP2</fullName>
    </recommendedName>
</protein>
<keyword id="KW-0002">3D-structure</keyword>
<keyword id="KW-1185">Reference proteome</keyword>
<organism>
    <name type="scientific">Bos taurus</name>
    <name type="common">Bovine</name>
    <dbReference type="NCBI Taxonomy" id="9913"/>
    <lineage>
        <taxon>Eukaryota</taxon>
        <taxon>Metazoa</taxon>
        <taxon>Chordata</taxon>
        <taxon>Craniata</taxon>
        <taxon>Vertebrata</taxon>
        <taxon>Euteleostomi</taxon>
        <taxon>Mammalia</taxon>
        <taxon>Eutheria</taxon>
        <taxon>Laurasiatheria</taxon>
        <taxon>Artiodactyla</taxon>
        <taxon>Ruminantia</taxon>
        <taxon>Pecora</taxon>
        <taxon>Bovidae</taxon>
        <taxon>Bovinae</taxon>
        <taxon>Bos</taxon>
    </lineage>
</organism>
<dbReference type="EMBL" id="BC112545">
    <property type="protein sequence ID" value="AAI12546.1"/>
    <property type="molecule type" value="mRNA"/>
</dbReference>
<dbReference type="RefSeq" id="NP_001070556.1">
    <property type="nucleotide sequence ID" value="NM_001077088.2"/>
</dbReference>
<dbReference type="PDB" id="8OTZ">
    <property type="method" value="EM"/>
    <property type="resolution" value="3.60 A"/>
    <property type="chains" value="ke=1-197"/>
</dbReference>
<dbReference type="PDBsum" id="8OTZ"/>
<dbReference type="EMDB" id="EMD-17187"/>
<dbReference type="EMDB" id="EMD-50664"/>
<dbReference type="FunCoup" id="Q2KIR0">
    <property type="interactions" value="6"/>
</dbReference>
<dbReference type="STRING" id="9913.ENSBTAP00000044861"/>
<dbReference type="PaxDb" id="9913-ENSBTAP00000044861"/>
<dbReference type="Ensembl" id="ENSBTAT00000047680.2">
    <property type="protein sequence ID" value="ENSBTAP00000044861.1"/>
    <property type="gene ID" value="ENSBTAG00000033547.3"/>
</dbReference>
<dbReference type="GeneID" id="768029"/>
<dbReference type="KEGG" id="bta:768029"/>
<dbReference type="CTD" id="768029"/>
<dbReference type="VEuPathDB" id="HostDB:ENSBTAG00000033547"/>
<dbReference type="VGNC" id="VGNC:52649">
    <property type="gene designation" value="SPMIP2"/>
</dbReference>
<dbReference type="eggNOG" id="ENOG502S3MZ">
    <property type="taxonomic scope" value="Eukaryota"/>
</dbReference>
<dbReference type="GeneTree" id="ENSGT00390000012736"/>
<dbReference type="HOGENOM" id="CLU_105465_0_0_1"/>
<dbReference type="InParanoid" id="Q2KIR0"/>
<dbReference type="OMA" id="DRRNSKW"/>
<dbReference type="OrthoDB" id="6140842at2759"/>
<dbReference type="TreeFam" id="TF329701"/>
<dbReference type="Proteomes" id="UP000009136">
    <property type="component" value="Chromosome 17"/>
</dbReference>
<dbReference type="Bgee" id="ENSBTAG00000033547">
    <property type="expression patterns" value="Expressed in semen and 24 other cell types or tissues"/>
</dbReference>
<dbReference type="InterPro" id="IPR027814">
    <property type="entry name" value="DUF4562"/>
</dbReference>
<dbReference type="PANTHER" id="PTHR34833">
    <property type="entry name" value="GENE, 17359-RELATED"/>
    <property type="match status" value="1"/>
</dbReference>
<dbReference type="PANTHER" id="PTHR34833:SF1">
    <property type="entry name" value="GENE, 17359-RELATED"/>
    <property type="match status" value="1"/>
</dbReference>
<dbReference type="Pfam" id="PF15123">
    <property type="entry name" value="DUF4562"/>
    <property type="match status" value="1"/>
</dbReference>